<accession>A8Z690</accession>
<protein>
    <recommendedName>
        <fullName evidence="1">Small ribosomal subunit protein uS4</fullName>
    </recommendedName>
    <alternativeName>
        <fullName evidence="2">30S ribosomal protein S4</fullName>
    </alternativeName>
</protein>
<reference key="1">
    <citation type="journal article" date="2007" name="Proc. Natl. Acad. Sci. U.S.A.">
        <title>Parallel genomic evolution and metabolic interdependence in an ancient symbiosis.</title>
        <authorList>
            <person name="McCutcheon J.P."/>
            <person name="Moran N.A."/>
        </authorList>
    </citation>
    <scope>NUCLEOTIDE SEQUENCE [LARGE SCALE GENOMIC DNA]</scope>
    <source>
        <strain>GWSS</strain>
    </source>
</reference>
<proteinExistence type="inferred from homology"/>
<evidence type="ECO:0000255" key="1">
    <source>
        <dbReference type="HAMAP-Rule" id="MF_01306"/>
    </source>
</evidence>
<evidence type="ECO:0000305" key="2"/>
<sequence>MARYIGPKTKISRKFGELIYGKTNKSFEKKKYPPGNSSSRNIKKTFYSTQLLEKQKIKYTYGILERQFLKMFYKASKKKGIKGEILLQLCESRLDNIVYRLNLSHSRPEARQLVSHRHITVNGKIVNIPSFNLKPGDKISLKEKHKHKANKNKLLGSDWLSWDNEKMIGIFKYIPNRNQITENINEKLIVELYSK</sequence>
<comment type="function">
    <text evidence="1">One of the primary rRNA binding proteins, it binds directly to 16S rRNA where it nucleates assembly of the body of the 30S subunit.</text>
</comment>
<comment type="function">
    <text evidence="1">With S5 and S12 plays an important role in translational accuracy.</text>
</comment>
<comment type="subunit">
    <text evidence="1">Part of the 30S ribosomal subunit. Contacts protein S5. The interaction surface between S4 and S5 is involved in control of translational fidelity.</text>
</comment>
<comment type="similarity">
    <text evidence="1">Belongs to the universal ribosomal protein uS4 family.</text>
</comment>
<dbReference type="EMBL" id="CP000770">
    <property type="protein sequence ID" value="ABS30641.1"/>
    <property type="molecule type" value="Genomic_DNA"/>
</dbReference>
<dbReference type="SMR" id="A8Z690"/>
<dbReference type="STRING" id="444179.SMGWSS_244"/>
<dbReference type="KEGG" id="smg:SMGWSS_244"/>
<dbReference type="HOGENOM" id="CLU_092403_0_2_10"/>
<dbReference type="Proteomes" id="UP000000781">
    <property type="component" value="Chromosome"/>
</dbReference>
<dbReference type="GO" id="GO:0015935">
    <property type="term" value="C:small ribosomal subunit"/>
    <property type="evidence" value="ECO:0007669"/>
    <property type="project" value="InterPro"/>
</dbReference>
<dbReference type="GO" id="GO:0019843">
    <property type="term" value="F:rRNA binding"/>
    <property type="evidence" value="ECO:0007669"/>
    <property type="project" value="UniProtKB-UniRule"/>
</dbReference>
<dbReference type="GO" id="GO:0003735">
    <property type="term" value="F:structural constituent of ribosome"/>
    <property type="evidence" value="ECO:0007669"/>
    <property type="project" value="InterPro"/>
</dbReference>
<dbReference type="GO" id="GO:0042274">
    <property type="term" value="P:ribosomal small subunit biogenesis"/>
    <property type="evidence" value="ECO:0007669"/>
    <property type="project" value="TreeGrafter"/>
</dbReference>
<dbReference type="GO" id="GO:0006412">
    <property type="term" value="P:translation"/>
    <property type="evidence" value="ECO:0007669"/>
    <property type="project" value="UniProtKB-UniRule"/>
</dbReference>
<dbReference type="CDD" id="cd00165">
    <property type="entry name" value="S4"/>
    <property type="match status" value="1"/>
</dbReference>
<dbReference type="FunFam" id="3.10.290.10:FF:000001">
    <property type="entry name" value="30S ribosomal protein S4"/>
    <property type="match status" value="1"/>
</dbReference>
<dbReference type="Gene3D" id="1.10.1050.10">
    <property type="entry name" value="Ribosomal Protein S4 Delta 41, Chain A, domain 1"/>
    <property type="match status" value="1"/>
</dbReference>
<dbReference type="Gene3D" id="3.10.290.10">
    <property type="entry name" value="RNA-binding S4 domain"/>
    <property type="match status" value="1"/>
</dbReference>
<dbReference type="HAMAP" id="MF_01306_B">
    <property type="entry name" value="Ribosomal_uS4_B"/>
    <property type="match status" value="1"/>
</dbReference>
<dbReference type="InterPro" id="IPR022801">
    <property type="entry name" value="Ribosomal_uS4"/>
</dbReference>
<dbReference type="InterPro" id="IPR005709">
    <property type="entry name" value="Ribosomal_uS4_bac-type"/>
</dbReference>
<dbReference type="InterPro" id="IPR001912">
    <property type="entry name" value="Ribosomal_uS4_N"/>
</dbReference>
<dbReference type="InterPro" id="IPR002942">
    <property type="entry name" value="S4_RNA-bd"/>
</dbReference>
<dbReference type="InterPro" id="IPR036986">
    <property type="entry name" value="S4_RNA-bd_sf"/>
</dbReference>
<dbReference type="NCBIfam" id="NF003717">
    <property type="entry name" value="PRK05327.1"/>
    <property type="match status" value="1"/>
</dbReference>
<dbReference type="NCBIfam" id="TIGR01017">
    <property type="entry name" value="rpsD_bact"/>
    <property type="match status" value="1"/>
</dbReference>
<dbReference type="PANTHER" id="PTHR11831">
    <property type="entry name" value="30S 40S RIBOSOMAL PROTEIN"/>
    <property type="match status" value="1"/>
</dbReference>
<dbReference type="PANTHER" id="PTHR11831:SF4">
    <property type="entry name" value="SMALL RIBOSOMAL SUBUNIT PROTEIN US4M"/>
    <property type="match status" value="1"/>
</dbReference>
<dbReference type="Pfam" id="PF00163">
    <property type="entry name" value="Ribosomal_S4"/>
    <property type="match status" value="1"/>
</dbReference>
<dbReference type="Pfam" id="PF01479">
    <property type="entry name" value="S4"/>
    <property type="match status" value="1"/>
</dbReference>
<dbReference type="SMART" id="SM01390">
    <property type="entry name" value="Ribosomal_S4"/>
    <property type="match status" value="1"/>
</dbReference>
<dbReference type="SMART" id="SM00363">
    <property type="entry name" value="S4"/>
    <property type="match status" value="1"/>
</dbReference>
<dbReference type="SUPFAM" id="SSF55174">
    <property type="entry name" value="Alpha-L RNA-binding motif"/>
    <property type="match status" value="1"/>
</dbReference>
<dbReference type="PROSITE" id="PS50889">
    <property type="entry name" value="S4"/>
    <property type="match status" value="1"/>
</dbReference>
<gene>
    <name evidence="1" type="primary">rpsD</name>
    <name type="ordered locus">SMGWSS_244</name>
</gene>
<keyword id="KW-0687">Ribonucleoprotein</keyword>
<keyword id="KW-0689">Ribosomal protein</keyword>
<keyword id="KW-0694">RNA-binding</keyword>
<keyword id="KW-0699">rRNA-binding</keyword>
<feature type="chain" id="PRO_0000322342" description="Small ribosomal subunit protein uS4">
    <location>
        <begin position="1"/>
        <end position="195"/>
    </location>
</feature>
<feature type="domain" description="S4 RNA-binding" evidence="1">
    <location>
        <begin position="92"/>
        <end position="152"/>
    </location>
</feature>
<organism>
    <name type="scientific">Karelsulcia muelleri (strain GWSS)</name>
    <name type="common">Sulcia muelleri</name>
    <dbReference type="NCBI Taxonomy" id="444179"/>
    <lineage>
        <taxon>Bacteria</taxon>
        <taxon>Pseudomonadati</taxon>
        <taxon>Bacteroidota</taxon>
        <taxon>Flavobacteriia</taxon>
        <taxon>Flavobacteriales</taxon>
        <taxon>Candidatus Karelsulcia</taxon>
    </lineage>
</organism>
<name>RS4_KARMG</name>